<keyword id="KW-0963">Cytoplasm</keyword>
<keyword id="KW-0694">RNA-binding</keyword>
<feature type="chain" id="PRO_1000116864" description="SsrA-binding protein">
    <location>
        <begin position="1"/>
        <end position="160"/>
    </location>
</feature>
<gene>
    <name evidence="1" type="primary">smpB</name>
    <name type="ordered locus">ECED1_3058</name>
</gene>
<organism>
    <name type="scientific">Escherichia coli O81 (strain ED1a)</name>
    <dbReference type="NCBI Taxonomy" id="585397"/>
    <lineage>
        <taxon>Bacteria</taxon>
        <taxon>Pseudomonadati</taxon>
        <taxon>Pseudomonadota</taxon>
        <taxon>Gammaproteobacteria</taxon>
        <taxon>Enterobacterales</taxon>
        <taxon>Enterobacteriaceae</taxon>
        <taxon>Escherichia</taxon>
    </lineage>
</organism>
<reference key="1">
    <citation type="journal article" date="2009" name="PLoS Genet.">
        <title>Organised genome dynamics in the Escherichia coli species results in highly diverse adaptive paths.</title>
        <authorList>
            <person name="Touchon M."/>
            <person name="Hoede C."/>
            <person name="Tenaillon O."/>
            <person name="Barbe V."/>
            <person name="Baeriswyl S."/>
            <person name="Bidet P."/>
            <person name="Bingen E."/>
            <person name="Bonacorsi S."/>
            <person name="Bouchier C."/>
            <person name="Bouvet O."/>
            <person name="Calteau A."/>
            <person name="Chiapello H."/>
            <person name="Clermont O."/>
            <person name="Cruveiller S."/>
            <person name="Danchin A."/>
            <person name="Diard M."/>
            <person name="Dossat C."/>
            <person name="Karoui M.E."/>
            <person name="Frapy E."/>
            <person name="Garry L."/>
            <person name="Ghigo J.M."/>
            <person name="Gilles A.M."/>
            <person name="Johnson J."/>
            <person name="Le Bouguenec C."/>
            <person name="Lescat M."/>
            <person name="Mangenot S."/>
            <person name="Martinez-Jehanne V."/>
            <person name="Matic I."/>
            <person name="Nassif X."/>
            <person name="Oztas S."/>
            <person name="Petit M.A."/>
            <person name="Pichon C."/>
            <person name="Rouy Z."/>
            <person name="Ruf C.S."/>
            <person name="Schneider D."/>
            <person name="Tourret J."/>
            <person name="Vacherie B."/>
            <person name="Vallenet D."/>
            <person name="Medigue C."/>
            <person name="Rocha E.P.C."/>
            <person name="Denamur E."/>
        </authorList>
    </citation>
    <scope>NUCLEOTIDE SEQUENCE [LARGE SCALE GENOMIC DNA]</scope>
    <source>
        <strain>ED1a</strain>
    </source>
</reference>
<evidence type="ECO:0000255" key="1">
    <source>
        <dbReference type="HAMAP-Rule" id="MF_00023"/>
    </source>
</evidence>
<proteinExistence type="inferred from homology"/>
<dbReference type="EMBL" id="CU928162">
    <property type="protein sequence ID" value="CAR09225.2"/>
    <property type="molecule type" value="Genomic_DNA"/>
</dbReference>
<dbReference type="RefSeq" id="WP_000162574.1">
    <property type="nucleotide sequence ID" value="NC_011745.1"/>
</dbReference>
<dbReference type="SMR" id="B7MYQ8"/>
<dbReference type="GeneID" id="93774470"/>
<dbReference type="KEGG" id="ecq:ECED1_3058"/>
<dbReference type="HOGENOM" id="CLU_108953_3_0_6"/>
<dbReference type="Proteomes" id="UP000000748">
    <property type="component" value="Chromosome"/>
</dbReference>
<dbReference type="GO" id="GO:0005829">
    <property type="term" value="C:cytosol"/>
    <property type="evidence" value="ECO:0007669"/>
    <property type="project" value="TreeGrafter"/>
</dbReference>
<dbReference type="GO" id="GO:0003723">
    <property type="term" value="F:RNA binding"/>
    <property type="evidence" value="ECO:0007669"/>
    <property type="project" value="UniProtKB-UniRule"/>
</dbReference>
<dbReference type="GO" id="GO:0070929">
    <property type="term" value="P:trans-translation"/>
    <property type="evidence" value="ECO:0007669"/>
    <property type="project" value="UniProtKB-UniRule"/>
</dbReference>
<dbReference type="CDD" id="cd09294">
    <property type="entry name" value="SmpB"/>
    <property type="match status" value="1"/>
</dbReference>
<dbReference type="FunFam" id="2.40.280.10:FF:000001">
    <property type="entry name" value="SsrA-binding protein"/>
    <property type="match status" value="1"/>
</dbReference>
<dbReference type="Gene3D" id="2.40.280.10">
    <property type="match status" value="1"/>
</dbReference>
<dbReference type="HAMAP" id="MF_00023">
    <property type="entry name" value="SmpB"/>
    <property type="match status" value="1"/>
</dbReference>
<dbReference type="InterPro" id="IPR023620">
    <property type="entry name" value="SmpB"/>
</dbReference>
<dbReference type="InterPro" id="IPR000037">
    <property type="entry name" value="SsrA-bd_prot"/>
</dbReference>
<dbReference type="InterPro" id="IPR020081">
    <property type="entry name" value="SsrA-bd_prot_CS"/>
</dbReference>
<dbReference type="NCBIfam" id="NF003843">
    <property type="entry name" value="PRK05422.1"/>
    <property type="match status" value="1"/>
</dbReference>
<dbReference type="NCBIfam" id="TIGR00086">
    <property type="entry name" value="smpB"/>
    <property type="match status" value="1"/>
</dbReference>
<dbReference type="PANTHER" id="PTHR30308:SF2">
    <property type="entry name" value="SSRA-BINDING PROTEIN"/>
    <property type="match status" value="1"/>
</dbReference>
<dbReference type="PANTHER" id="PTHR30308">
    <property type="entry name" value="TMRNA-BINDING COMPONENT OF TRANS-TRANSLATION TAGGING COMPLEX"/>
    <property type="match status" value="1"/>
</dbReference>
<dbReference type="Pfam" id="PF01668">
    <property type="entry name" value="SmpB"/>
    <property type="match status" value="1"/>
</dbReference>
<dbReference type="SUPFAM" id="SSF74982">
    <property type="entry name" value="Small protein B (SmpB)"/>
    <property type="match status" value="1"/>
</dbReference>
<dbReference type="PROSITE" id="PS01317">
    <property type="entry name" value="SSRP"/>
    <property type="match status" value="1"/>
</dbReference>
<protein>
    <recommendedName>
        <fullName evidence="1">SsrA-binding protein</fullName>
    </recommendedName>
    <alternativeName>
        <fullName evidence="1">Small protein B</fullName>
    </alternativeName>
</protein>
<comment type="function">
    <text evidence="1">Required for rescue of stalled ribosomes mediated by trans-translation. Binds to transfer-messenger RNA (tmRNA), required for stable association of tmRNA with ribosomes. tmRNA and SmpB together mimic tRNA shape, replacing the anticodon stem-loop with SmpB. tmRNA is encoded by the ssrA gene; the 2 termini fold to resemble tRNA(Ala) and it encodes a 'tag peptide', a short internal open reading frame. During trans-translation Ala-aminoacylated tmRNA acts like a tRNA, entering the A-site of stalled ribosomes, displacing the stalled mRNA. The ribosome then switches to translate the ORF on the tmRNA; the nascent peptide is terminated with the 'tag peptide' encoded by the tmRNA and targeted for degradation. The ribosome is freed to recommence translation, which seems to be the essential function of trans-translation.</text>
</comment>
<comment type="subcellular location">
    <subcellularLocation>
        <location evidence="1">Cytoplasm</location>
    </subcellularLocation>
    <text evidence="1">The tmRNA-SmpB complex associates with stalled 70S ribosomes.</text>
</comment>
<comment type="similarity">
    <text evidence="1">Belongs to the SmpB family.</text>
</comment>
<sequence length="160" mass="18269">MTKKKAHKPGSATIALNKRARHEYFIEEEFEAGLALQGWEVKSLRAGKANISDSYVLLRDGEAFLFGANITPMAVASTHVVCDPTRTRKLLLNQRELDSLYGRVNREGYTVVALSLYWKNAWCKVKIGVAKGKKQHDKRSDIKEREWQVDKARIMKNAHR</sequence>
<name>SSRP_ECO81</name>
<accession>B7MYQ8</accession>